<dbReference type="EC" id="6.3.4.4" evidence="1"/>
<dbReference type="EMBL" id="AM263198">
    <property type="protein sequence ID" value="CAK19464.1"/>
    <property type="molecule type" value="Genomic_DNA"/>
</dbReference>
<dbReference type="RefSeq" id="WP_011700920.1">
    <property type="nucleotide sequence ID" value="NC_008555.1"/>
</dbReference>
<dbReference type="SMR" id="A0AEN2"/>
<dbReference type="STRING" id="386043.lwe0046"/>
<dbReference type="GeneID" id="61187929"/>
<dbReference type="KEGG" id="lwe:lwe0046"/>
<dbReference type="eggNOG" id="COG0104">
    <property type="taxonomic scope" value="Bacteria"/>
</dbReference>
<dbReference type="HOGENOM" id="CLU_029848_0_0_9"/>
<dbReference type="OrthoDB" id="9807553at2"/>
<dbReference type="UniPathway" id="UPA00075">
    <property type="reaction ID" value="UER00335"/>
</dbReference>
<dbReference type="Proteomes" id="UP000000779">
    <property type="component" value="Chromosome"/>
</dbReference>
<dbReference type="GO" id="GO:0005737">
    <property type="term" value="C:cytoplasm"/>
    <property type="evidence" value="ECO:0007669"/>
    <property type="project" value="UniProtKB-SubCell"/>
</dbReference>
<dbReference type="GO" id="GO:0004019">
    <property type="term" value="F:adenylosuccinate synthase activity"/>
    <property type="evidence" value="ECO:0007669"/>
    <property type="project" value="UniProtKB-UniRule"/>
</dbReference>
<dbReference type="GO" id="GO:0005525">
    <property type="term" value="F:GTP binding"/>
    <property type="evidence" value="ECO:0007669"/>
    <property type="project" value="UniProtKB-UniRule"/>
</dbReference>
<dbReference type="GO" id="GO:0000287">
    <property type="term" value="F:magnesium ion binding"/>
    <property type="evidence" value="ECO:0007669"/>
    <property type="project" value="UniProtKB-UniRule"/>
</dbReference>
<dbReference type="GO" id="GO:0044208">
    <property type="term" value="P:'de novo' AMP biosynthetic process"/>
    <property type="evidence" value="ECO:0007669"/>
    <property type="project" value="UniProtKB-UniRule"/>
</dbReference>
<dbReference type="GO" id="GO:0046040">
    <property type="term" value="P:IMP metabolic process"/>
    <property type="evidence" value="ECO:0007669"/>
    <property type="project" value="TreeGrafter"/>
</dbReference>
<dbReference type="CDD" id="cd03108">
    <property type="entry name" value="AdSS"/>
    <property type="match status" value="1"/>
</dbReference>
<dbReference type="FunFam" id="1.10.300.10:FF:000001">
    <property type="entry name" value="Adenylosuccinate synthetase"/>
    <property type="match status" value="1"/>
</dbReference>
<dbReference type="FunFam" id="3.90.170.10:FF:000001">
    <property type="entry name" value="Adenylosuccinate synthetase"/>
    <property type="match status" value="1"/>
</dbReference>
<dbReference type="Gene3D" id="3.40.440.10">
    <property type="entry name" value="Adenylosuccinate Synthetase, subunit A, domain 1"/>
    <property type="match status" value="1"/>
</dbReference>
<dbReference type="Gene3D" id="1.10.300.10">
    <property type="entry name" value="Adenylosuccinate Synthetase, subunit A, domain 2"/>
    <property type="match status" value="1"/>
</dbReference>
<dbReference type="Gene3D" id="3.90.170.10">
    <property type="entry name" value="Adenylosuccinate Synthetase, subunit A, domain 3"/>
    <property type="match status" value="1"/>
</dbReference>
<dbReference type="HAMAP" id="MF_00011">
    <property type="entry name" value="Adenylosucc_synth"/>
    <property type="match status" value="1"/>
</dbReference>
<dbReference type="InterPro" id="IPR018220">
    <property type="entry name" value="Adenylosuccin_syn_GTP-bd"/>
</dbReference>
<dbReference type="InterPro" id="IPR033128">
    <property type="entry name" value="Adenylosuccin_syn_Lys_AS"/>
</dbReference>
<dbReference type="InterPro" id="IPR042109">
    <property type="entry name" value="Adenylosuccinate_synth_dom1"/>
</dbReference>
<dbReference type="InterPro" id="IPR042110">
    <property type="entry name" value="Adenylosuccinate_synth_dom2"/>
</dbReference>
<dbReference type="InterPro" id="IPR042111">
    <property type="entry name" value="Adenylosuccinate_synth_dom3"/>
</dbReference>
<dbReference type="InterPro" id="IPR001114">
    <property type="entry name" value="Adenylosuccinate_synthetase"/>
</dbReference>
<dbReference type="InterPro" id="IPR027417">
    <property type="entry name" value="P-loop_NTPase"/>
</dbReference>
<dbReference type="NCBIfam" id="NF002223">
    <property type="entry name" value="PRK01117.1"/>
    <property type="match status" value="1"/>
</dbReference>
<dbReference type="NCBIfam" id="TIGR00184">
    <property type="entry name" value="purA"/>
    <property type="match status" value="1"/>
</dbReference>
<dbReference type="PANTHER" id="PTHR11846">
    <property type="entry name" value="ADENYLOSUCCINATE SYNTHETASE"/>
    <property type="match status" value="1"/>
</dbReference>
<dbReference type="PANTHER" id="PTHR11846:SF0">
    <property type="entry name" value="ADENYLOSUCCINATE SYNTHETASE"/>
    <property type="match status" value="1"/>
</dbReference>
<dbReference type="Pfam" id="PF00709">
    <property type="entry name" value="Adenylsucc_synt"/>
    <property type="match status" value="1"/>
</dbReference>
<dbReference type="SMART" id="SM00788">
    <property type="entry name" value="Adenylsucc_synt"/>
    <property type="match status" value="1"/>
</dbReference>
<dbReference type="SUPFAM" id="SSF52540">
    <property type="entry name" value="P-loop containing nucleoside triphosphate hydrolases"/>
    <property type="match status" value="1"/>
</dbReference>
<dbReference type="PROSITE" id="PS01266">
    <property type="entry name" value="ADENYLOSUCCIN_SYN_1"/>
    <property type="match status" value="1"/>
</dbReference>
<dbReference type="PROSITE" id="PS00513">
    <property type="entry name" value="ADENYLOSUCCIN_SYN_2"/>
    <property type="match status" value="1"/>
</dbReference>
<evidence type="ECO:0000255" key="1">
    <source>
        <dbReference type="HAMAP-Rule" id="MF_00011"/>
    </source>
</evidence>
<accession>A0AEN2</accession>
<sequence>MSSVVVVGTQWGDEGKGKITDFLSENAEAIARYQGGNNAGHTIKFDGETYKLHLIPSGIFYKEKISVIGNGMVVDPKALVEELKYLHDKGVDTSNLRISNRAHIILPYHIRIDEADEERKGANKIGTTKKGIGPAYMDKAARVGIRIIDLLDKETFKEKLEHNLGEKNRLLERFYELEGFKLEDILEEYYGYGQQFKDYVCDTSVVLNDALDDGKRVLFEGAQGVMLDIDQGTYPFVTSSNPIAGGVTIGSGVGPSKINHVVGVAKAYTTRVGDGPFPTELFDSIGDNIREVGREYGTTTGRPRRVGWFDSVVVRHARRVSGLTDLSLTLLDVLTGIETLKICVAYKLDGKTITEFPASLKDLARCEPVYEELPGWTEDITEVKSLDDLPVNCRHYMERIAQLTGVQVSMFSVGPDRAQTHVVKSVWRLA</sequence>
<organism>
    <name type="scientific">Listeria welshimeri serovar 6b (strain ATCC 35897 / DSM 20650 / CCUG 15529 / CIP 8149 / NCTC 11857 / SLCC 5334 / V8)</name>
    <dbReference type="NCBI Taxonomy" id="386043"/>
    <lineage>
        <taxon>Bacteria</taxon>
        <taxon>Bacillati</taxon>
        <taxon>Bacillota</taxon>
        <taxon>Bacilli</taxon>
        <taxon>Bacillales</taxon>
        <taxon>Listeriaceae</taxon>
        <taxon>Listeria</taxon>
    </lineage>
</organism>
<proteinExistence type="inferred from homology"/>
<reference key="1">
    <citation type="journal article" date="2006" name="J. Bacteriol.">
        <title>Whole-genome sequence of Listeria welshimeri reveals common steps in genome reduction with Listeria innocua as compared to Listeria monocytogenes.</title>
        <authorList>
            <person name="Hain T."/>
            <person name="Steinweg C."/>
            <person name="Kuenne C.T."/>
            <person name="Billion A."/>
            <person name="Ghai R."/>
            <person name="Chatterjee S.S."/>
            <person name="Domann E."/>
            <person name="Kaerst U."/>
            <person name="Goesmann A."/>
            <person name="Bekel T."/>
            <person name="Bartels D."/>
            <person name="Kaiser O."/>
            <person name="Meyer F."/>
            <person name="Puehler A."/>
            <person name="Weisshaar B."/>
            <person name="Wehland J."/>
            <person name="Liang C."/>
            <person name="Dandekar T."/>
            <person name="Lampidis R."/>
            <person name="Kreft J."/>
            <person name="Goebel W."/>
            <person name="Chakraborty T."/>
        </authorList>
    </citation>
    <scope>NUCLEOTIDE SEQUENCE [LARGE SCALE GENOMIC DNA]</scope>
    <source>
        <strain>ATCC 35897 / DSM 20650 / CCUG 15529 / CIP 8149 / NCTC 11857 / SLCC 5334 / V8</strain>
    </source>
</reference>
<name>PURA_LISW6</name>
<keyword id="KW-0963">Cytoplasm</keyword>
<keyword id="KW-0342">GTP-binding</keyword>
<keyword id="KW-0436">Ligase</keyword>
<keyword id="KW-0460">Magnesium</keyword>
<keyword id="KW-0479">Metal-binding</keyword>
<keyword id="KW-0547">Nucleotide-binding</keyword>
<keyword id="KW-0658">Purine biosynthesis</keyword>
<protein>
    <recommendedName>
        <fullName evidence="1">Adenylosuccinate synthetase</fullName>
        <shortName evidence="1">AMPSase</shortName>
        <shortName evidence="1">AdSS</shortName>
        <ecNumber evidence="1">6.3.4.4</ecNumber>
    </recommendedName>
    <alternativeName>
        <fullName evidence="1">IMP--aspartate ligase</fullName>
    </alternativeName>
</protein>
<gene>
    <name evidence="1" type="primary">purA</name>
    <name type="ordered locus">lwe0046</name>
</gene>
<feature type="chain" id="PRO_1000000851" description="Adenylosuccinate synthetase">
    <location>
        <begin position="1"/>
        <end position="430"/>
    </location>
</feature>
<feature type="active site" description="Proton acceptor" evidence="1">
    <location>
        <position position="13"/>
    </location>
</feature>
<feature type="active site" description="Proton donor" evidence="1">
    <location>
        <position position="41"/>
    </location>
</feature>
<feature type="binding site" evidence="1">
    <location>
        <begin position="12"/>
        <end position="18"/>
    </location>
    <ligand>
        <name>GTP</name>
        <dbReference type="ChEBI" id="CHEBI:37565"/>
    </ligand>
</feature>
<feature type="binding site" description="in other chain" evidence="1">
    <location>
        <begin position="13"/>
        <end position="16"/>
    </location>
    <ligand>
        <name>IMP</name>
        <dbReference type="ChEBI" id="CHEBI:58053"/>
        <note>ligand shared between dimeric partners</note>
    </ligand>
</feature>
<feature type="binding site" evidence="1">
    <location>
        <position position="13"/>
    </location>
    <ligand>
        <name>Mg(2+)</name>
        <dbReference type="ChEBI" id="CHEBI:18420"/>
    </ligand>
</feature>
<feature type="binding site" description="in other chain" evidence="1">
    <location>
        <begin position="38"/>
        <end position="41"/>
    </location>
    <ligand>
        <name>IMP</name>
        <dbReference type="ChEBI" id="CHEBI:58053"/>
        <note>ligand shared between dimeric partners</note>
    </ligand>
</feature>
<feature type="binding site" evidence="1">
    <location>
        <begin position="40"/>
        <end position="42"/>
    </location>
    <ligand>
        <name>GTP</name>
        <dbReference type="ChEBI" id="CHEBI:37565"/>
    </ligand>
</feature>
<feature type="binding site" evidence="1">
    <location>
        <position position="40"/>
    </location>
    <ligand>
        <name>Mg(2+)</name>
        <dbReference type="ChEBI" id="CHEBI:18420"/>
    </ligand>
</feature>
<feature type="binding site" description="in other chain" evidence="1">
    <location>
        <position position="128"/>
    </location>
    <ligand>
        <name>IMP</name>
        <dbReference type="ChEBI" id="CHEBI:58053"/>
        <note>ligand shared between dimeric partners</note>
    </ligand>
</feature>
<feature type="binding site" evidence="1">
    <location>
        <position position="142"/>
    </location>
    <ligand>
        <name>IMP</name>
        <dbReference type="ChEBI" id="CHEBI:58053"/>
        <note>ligand shared between dimeric partners</note>
    </ligand>
</feature>
<feature type="binding site" description="in other chain" evidence="1">
    <location>
        <position position="223"/>
    </location>
    <ligand>
        <name>IMP</name>
        <dbReference type="ChEBI" id="CHEBI:58053"/>
        <note>ligand shared between dimeric partners</note>
    </ligand>
</feature>
<feature type="binding site" description="in other chain" evidence="1">
    <location>
        <position position="238"/>
    </location>
    <ligand>
        <name>IMP</name>
        <dbReference type="ChEBI" id="CHEBI:58053"/>
        <note>ligand shared between dimeric partners</note>
    </ligand>
</feature>
<feature type="binding site" evidence="1">
    <location>
        <begin position="298"/>
        <end position="304"/>
    </location>
    <ligand>
        <name>substrate</name>
    </ligand>
</feature>
<feature type="binding site" description="in other chain" evidence="1">
    <location>
        <position position="302"/>
    </location>
    <ligand>
        <name>IMP</name>
        <dbReference type="ChEBI" id="CHEBI:58053"/>
        <note>ligand shared between dimeric partners</note>
    </ligand>
</feature>
<feature type="binding site" evidence="1">
    <location>
        <position position="304"/>
    </location>
    <ligand>
        <name>GTP</name>
        <dbReference type="ChEBI" id="CHEBI:37565"/>
    </ligand>
</feature>
<feature type="binding site" evidence="1">
    <location>
        <begin position="330"/>
        <end position="332"/>
    </location>
    <ligand>
        <name>GTP</name>
        <dbReference type="ChEBI" id="CHEBI:37565"/>
    </ligand>
</feature>
<feature type="binding site" evidence="1">
    <location>
        <begin position="412"/>
        <end position="414"/>
    </location>
    <ligand>
        <name>GTP</name>
        <dbReference type="ChEBI" id="CHEBI:37565"/>
    </ligand>
</feature>
<comment type="function">
    <text evidence="1">Plays an important role in the de novo pathway of purine nucleotide biosynthesis. Catalyzes the first committed step in the biosynthesis of AMP from IMP.</text>
</comment>
<comment type="catalytic activity">
    <reaction evidence="1">
        <text>IMP + L-aspartate + GTP = N(6)-(1,2-dicarboxyethyl)-AMP + GDP + phosphate + 2 H(+)</text>
        <dbReference type="Rhea" id="RHEA:15753"/>
        <dbReference type="ChEBI" id="CHEBI:15378"/>
        <dbReference type="ChEBI" id="CHEBI:29991"/>
        <dbReference type="ChEBI" id="CHEBI:37565"/>
        <dbReference type="ChEBI" id="CHEBI:43474"/>
        <dbReference type="ChEBI" id="CHEBI:57567"/>
        <dbReference type="ChEBI" id="CHEBI:58053"/>
        <dbReference type="ChEBI" id="CHEBI:58189"/>
        <dbReference type="EC" id="6.3.4.4"/>
    </reaction>
</comment>
<comment type="cofactor">
    <cofactor evidence="1">
        <name>Mg(2+)</name>
        <dbReference type="ChEBI" id="CHEBI:18420"/>
    </cofactor>
    <text evidence="1">Binds 1 Mg(2+) ion per subunit.</text>
</comment>
<comment type="pathway">
    <text evidence="1">Purine metabolism; AMP biosynthesis via de novo pathway; AMP from IMP: step 1/2.</text>
</comment>
<comment type="subunit">
    <text evidence="1">Homodimer.</text>
</comment>
<comment type="subcellular location">
    <subcellularLocation>
        <location evidence="1">Cytoplasm</location>
    </subcellularLocation>
</comment>
<comment type="similarity">
    <text evidence="1">Belongs to the adenylosuccinate synthetase family.</text>
</comment>